<gene>
    <name evidence="5" type="primary">rnf126-b</name>
</gene>
<keyword id="KW-0963">Cytoplasm</keyword>
<keyword id="KW-0479">Metal-binding</keyword>
<keyword id="KW-0539">Nucleus</keyword>
<keyword id="KW-1185">Reference proteome</keyword>
<keyword id="KW-0808">Transferase</keyword>
<keyword id="KW-0833">Ubl conjugation pathway</keyword>
<keyword id="KW-0862">Zinc</keyword>
<keyword id="KW-0863">Zinc-finger</keyword>
<accession>Q6IRP0</accession>
<evidence type="ECO:0000250" key="1">
    <source>
        <dbReference type="UniProtKB" id="Q91YL2"/>
    </source>
</evidence>
<evidence type="ECO:0000250" key="2">
    <source>
        <dbReference type="UniProtKB" id="Q9BV68"/>
    </source>
</evidence>
<evidence type="ECO:0000255" key="3">
    <source>
        <dbReference type="PROSITE-ProRule" id="PRU00175"/>
    </source>
</evidence>
<evidence type="ECO:0000256" key="4">
    <source>
        <dbReference type="SAM" id="MobiDB-lite"/>
    </source>
</evidence>
<evidence type="ECO:0000305" key="5"/>
<proteinExistence type="evidence at transcript level"/>
<reference key="1">
    <citation type="submission" date="2004-05" db="EMBL/GenBank/DDBJ databases">
        <authorList>
            <consortium name="NIH - Xenopus Gene Collection (XGC) project"/>
        </authorList>
    </citation>
    <scope>NUCLEOTIDE SEQUENCE [LARGE SCALE MRNA]</scope>
    <source>
        <tissue>Embryo</tissue>
    </source>
</reference>
<name>R126B_XENLA</name>
<feature type="chain" id="PRO_0000056096" description="E3 ubiquitin-protein ligase RNF126-B">
    <location>
        <begin position="1"/>
        <end position="312"/>
    </location>
</feature>
<feature type="zinc finger region" description="C4-type" evidence="2">
    <location>
        <begin position="13"/>
        <end position="32"/>
    </location>
</feature>
<feature type="zinc finger region" description="RING-type" evidence="3">
    <location>
        <begin position="228"/>
        <end position="269"/>
    </location>
</feature>
<feature type="region of interest" description="Disordered" evidence="4">
    <location>
        <begin position="41"/>
        <end position="63"/>
    </location>
</feature>
<feature type="region of interest" description="Disordered" evidence="4">
    <location>
        <begin position="96"/>
        <end position="139"/>
    </location>
</feature>
<feature type="region of interest" description="Disordered" evidence="4">
    <location>
        <begin position="275"/>
        <end position="312"/>
    </location>
</feature>
<feature type="compositionally biased region" description="Low complexity" evidence="4">
    <location>
        <begin position="44"/>
        <end position="55"/>
    </location>
</feature>
<feature type="compositionally biased region" description="Basic and acidic residues" evidence="4">
    <location>
        <begin position="102"/>
        <end position="115"/>
    </location>
</feature>
<feature type="compositionally biased region" description="Basic residues" evidence="4">
    <location>
        <begin position="124"/>
        <end position="134"/>
    </location>
</feature>
<feature type="compositionally biased region" description="Low complexity" evidence="4">
    <location>
        <begin position="290"/>
        <end position="301"/>
    </location>
</feature>
<feature type="compositionally biased region" description="Polar residues" evidence="4">
    <location>
        <begin position="302"/>
        <end position="312"/>
    </location>
</feature>
<feature type="binding site" evidence="2">
    <location>
        <position position="13"/>
    </location>
    <ligand>
        <name>Zn(2+)</name>
        <dbReference type="ChEBI" id="CHEBI:29105"/>
    </ligand>
</feature>
<feature type="binding site" evidence="2">
    <location>
        <position position="16"/>
    </location>
    <ligand>
        <name>Zn(2+)</name>
        <dbReference type="ChEBI" id="CHEBI:29105"/>
    </ligand>
</feature>
<feature type="binding site" evidence="2">
    <location>
        <position position="29"/>
    </location>
    <ligand>
        <name>Zn(2+)</name>
        <dbReference type="ChEBI" id="CHEBI:29105"/>
    </ligand>
</feature>
<feature type="binding site" evidence="2">
    <location>
        <position position="32"/>
    </location>
    <ligand>
        <name>Zn(2+)</name>
        <dbReference type="ChEBI" id="CHEBI:29105"/>
    </ligand>
</feature>
<comment type="function">
    <text evidence="1 2">E3 ubiquitin-protein ligase that mediates ubiquitination oF target proteins. Depending on the associated E2 ligase, mediates 'Lys-27'-, 'Lys-29'-, 'Lys-48'- and/or 'Lys-63'-linked polyubiquitination of substrates. Part of a BAG6-dependent quality control process ensuring that proteins of the secretory pathway that are mislocalized to the cytosol are degraded by the proteasome. Probably acts by providing the ubiquitin ligase activity associated with the BAG6 complex and be responsible for ubiquitination of the hydrophobic mislocalized proteins and their targeting to the proteasome.</text>
</comment>
<comment type="catalytic activity">
    <reaction evidence="2">
        <text>S-ubiquitinyl-[E2 ubiquitin-conjugating enzyme]-L-cysteine + [acceptor protein]-L-lysine = [E2 ubiquitin-conjugating enzyme]-L-cysteine + N(6)-ubiquitinyl-[acceptor protein]-L-lysine.</text>
        <dbReference type="EC" id="2.3.2.27"/>
    </reaction>
</comment>
<comment type="pathway">
    <text evidence="2">Protein modification; protein ubiquitination.</text>
</comment>
<comment type="subcellular location">
    <subcellularLocation>
        <location evidence="2">Cytoplasm</location>
    </subcellularLocation>
    <subcellularLocation>
        <location evidence="2">Nucleus</location>
    </subcellularLocation>
</comment>
<organism>
    <name type="scientific">Xenopus laevis</name>
    <name type="common">African clawed frog</name>
    <dbReference type="NCBI Taxonomy" id="8355"/>
    <lineage>
        <taxon>Eukaryota</taxon>
        <taxon>Metazoa</taxon>
        <taxon>Chordata</taxon>
        <taxon>Craniata</taxon>
        <taxon>Vertebrata</taxon>
        <taxon>Euteleostomi</taxon>
        <taxon>Amphibia</taxon>
        <taxon>Batrachia</taxon>
        <taxon>Anura</taxon>
        <taxon>Pipoidea</taxon>
        <taxon>Pipidae</taxon>
        <taxon>Xenopodinae</taxon>
        <taxon>Xenopus</taxon>
        <taxon>Xenopus</taxon>
    </lineage>
</organism>
<protein>
    <recommendedName>
        <fullName evidence="5">E3 ubiquitin-protein ligase RNF126-B</fullName>
        <ecNumber evidence="2">2.3.2.27</ecNumber>
    </recommendedName>
    <alternativeName>
        <fullName evidence="5">RING finger protein 126-B</fullName>
    </alternativeName>
    <alternativeName>
        <fullName evidence="5">RING-type E3 ubiquitin transferase RNF126-B</fullName>
    </alternativeName>
</protein>
<dbReference type="EC" id="2.3.2.27" evidence="2"/>
<dbReference type="EMBL" id="BC070697">
    <property type="protein sequence ID" value="AAH70697.1"/>
    <property type="molecule type" value="mRNA"/>
</dbReference>
<dbReference type="RefSeq" id="NP_001084974.1">
    <property type="nucleotide sequence ID" value="NM_001091505.1"/>
</dbReference>
<dbReference type="SMR" id="Q6IRP0"/>
<dbReference type="DNASU" id="432033"/>
<dbReference type="GeneID" id="432033"/>
<dbReference type="KEGG" id="xla:432033"/>
<dbReference type="AGR" id="Xenbase:XB-GENE-5960942"/>
<dbReference type="CTD" id="432033"/>
<dbReference type="Xenbase" id="XB-GENE-5960942">
    <property type="gene designation" value="rnf126.S"/>
</dbReference>
<dbReference type="OMA" id="DERSADN"/>
<dbReference type="OrthoDB" id="8062037at2759"/>
<dbReference type="UniPathway" id="UPA00143"/>
<dbReference type="Proteomes" id="UP000186698">
    <property type="component" value="Chromosome 1S"/>
</dbReference>
<dbReference type="Bgee" id="432033">
    <property type="expression patterns" value="Expressed in egg cell and 19 other cell types or tissues"/>
</dbReference>
<dbReference type="GO" id="GO:0005737">
    <property type="term" value="C:cytoplasm"/>
    <property type="evidence" value="ECO:0000250"/>
    <property type="project" value="UniProtKB"/>
</dbReference>
<dbReference type="GO" id="GO:0005634">
    <property type="term" value="C:nucleus"/>
    <property type="evidence" value="ECO:0000250"/>
    <property type="project" value="UniProtKB"/>
</dbReference>
<dbReference type="GO" id="GO:0061630">
    <property type="term" value="F:ubiquitin protein ligase activity"/>
    <property type="evidence" value="ECO:0000250"/>
    <property type="project" value="UniProtKB"/>
</dbReference>
<dbReference type="GO" id="GO:0008270">
    <property type="term" value="F:zinc ion binding"/>
    <property type="evidence" value="ECO:0007669"/>
    <property type="project" value="UniProtKB-KW"/>
</dbReference>
<dbReference type="GO" id="GO:1905168">
    <property type="term" value="P:positive regulation of double-strand break repair via homologous recombination"/>
    <property type="evidence" value="ECO:0000250"/>
    <property type="project" value="UniProtKB"/>
</dbReference>
<dbReference type="GO" id="GO:0044314">
    <property type="term" value="P:protein K27-linked ubiquitination"/>
    <property type="evidence" value="ECO:0000250"/>
    <property type="project" value="UniProtKB"/>
</dbReference>
<dbReference type="GO" id="GO:0035519">
    <property type="term" value="P:protein K29-linked ubiquitination"/>
    <property type="evidence" value="ECO:0000250"/>
    <property type="project" value="UniProtKB"/>
</dbReference>
<dbReference type="GO" id="GO:0016567">
    <property type="term" value="P:protein ubiquitination"/>
    <property type="evidence" value="ECO:0000318"/>
    <property type="project" value="GO_Central"/>
</dbReference>
<dbReference type="GO" id="GO:0006511">
    <property type="term" value="P:ubiquitin-dependent protein catabolic process"/>
    <property type="evidence" value="ECO:0000250"/>
    <property type="project" value="UniProtKB"/>
</dbReference>
<dbReference type="CDD" id="cd16801">
    <property type="entry name" value="RING-H2_RNF126"/>
    <property type="match status" value="1"/>
</dbReference>
<dbReference type="FunFam" id="3.30.40.10:FF:000069">
    <property type="entry name" value="E3 ubiquitin-protein ligase RNF115"/>
    <property type="match status" value="1"/>
</dbReference>
<dbReference type="Gene3D" id="3.30.40.10">
    <property type="entry name" value="Zinc/RING finger domain, C3HC4 (zinc finger)"/>
    <property type="match status" value="1"/>
</dbReference>
<dbReference type="InterPro" id="IPR039525">
    <property type="entry name" value="RNF126-like_zinc-ribbon"/>
</dbReference>
<dbReference type="InterPro" id="IPR039571">
    <property type="entry name" value="RNF126_RING-H2"/>
</dbReference>
<dbReference type="InterPro" id="IPR001841">
    <property type="entry name" value="Znf_RING"/>
</dbReference>
<dbReference type="InterPro" id="IPR013083">
    <property type="entry name" value="Znf_RING/FYVE/PHD"/>
</dbReference>
<dbReference type="PANTHER" id="PTHR15710">
    <property type="entry name" value="E3 UBIQUITIN-PROTEIN LIGASE PRAJA"/>
    <property type="match status" value="1"/>
</dbReference>
<dbReference type="PANTHER" id="PTHR15710:SF21">
    <property type="entry name" value="E3 UBIQUITIN-PROTEIN LIGASE RNF126"/>
    <property type="match status" value="1"/>
</dbReference>
<dbReference type="Pfam" id="PF13639">
    <property type="entry name" value="zf-RING_2"/>
    <property type="match status" value="1"/>
</dbReference>
<dbReference type="Pfam" id="PF14369">
    <property type="entry name" value="Zn_ribbon_19"/>
    <property type="match status" value="1"/>
</dbReference>
<dbReference type="SMART" id="SM00184">
    <property type="entry name" value="RING"/>
    <property type="match status" value="1"/>
</dbReference>
<dbReference type="SUPFAM" id="SSF57850">
    <property type="entry name" value="RING/U-box"/>
    <property type="match status" value="1"/>
</dbReference>
<dbReference type="PROSITE" id="PS50089">
    <property type="entry name" value="ZF_RING_2"/>
    <property type="match status" value="1"/>
</dbReference>
<sequence length="312" mass="34026">MAEALPEAGRYFCHSCTAEITPRLPEYTCPRCDSGFIEELPETSRNSESNSSNNSGTDQNRPSFENIESAQFTLPSGYGQVTFGIFNEGLDFPMFGTSGPVEETRDGESRREHQSRQRYGARQPRARMSTRRGAGRNEGVPTLEGIIQQLVNGIIAPTAMSNLGVGPWGVLHSNPMDYAWGANGLDTIITQLLNQFENTGPPPADTDKIQALPTIQITEEHVGFGLECPVCKEDYTVGESVRQLPCNHLFHNDCIIPWLEQHDTCPVCRKSLSGQNTATNPPGLTDMTFSSSSTSSSSSTSPTDENNTANNS</sequence>